<gene>
    <name type="primary">Ephb3</name>
    <name type="synonym">Etk2</name>
    <name type="synonym">Mdk5</name>
    <name type="synonym">Sek4</name>
</gene>
<name>EPHB3_MOUSE</name>
<reference key="1">
    <citation type="journal article" date="1995" name="Oncogene">
        <title>Cloning, characterization, and differential expression of MDK2 and MDK5, two novel receptor tyrosine kinases of the eck/eph family.</title>
        <authorList>
            <person name="Ciossek T."/>
            <person name="Lerch M.M."/>
            <person name="Ullrich A."/>
        </authorList>
    </citation>
    <scope>NUCLEOTIDE SEQUENCE [MRNA]</scope>
    <source>
        <strain>BALB/cJ</strain>
        <tissue>Embryo</tissue>
    </source>
</reference>
<reference key="2">
    <citation type="journal article" date="2004" name="Genome Res.">
        <title>The status, quality, and expansion of the NIH full-length cDNA project: the Mammalian Gene Collection (MGC).</title>
        <authorList>
            <consortium name="The MGC Project Team"/>
        </authorList>
    </citation>
    <scope>NUCLEOTIDE SEQUENCE [LARGE SCALE MRNA]</scope>
    <source>
        <strain>C57BL/6J</strain>
        <strain>FVB/N</strain>
        <tissue>Brain</tissue>
        <tissue>Mammary tumor</tissue>
    </source>
</reference>
<reference key="3">
    <citation type="journal article" date="1994" name="Mech. Dev.">
        <title>Several receptor tyrosine kinase genes of the Eph family are segmentally expressed in the developing hindbrain.</title>
        <authorList>
            <person name="Becker N."/>
            <person name="Seitanidou T."/>
            <person name="Murphy P."/>
            <person name="Mattei M.-G."/>
            <person name="Topilko P."/>
            <person name="Nieto A."/>
            <person name="Wilkinson D.G."/>
            <person name="Charnay P."/>
            <person name="Gilardi P."/>
        </authorList>
    </citation>
    <scope>NUCLEOTIDE SEQUENCE [MRNA] OF 719-993</scope>
    <source>
        <strain>BALB/cJ</strain>
        <tissue>Brain</tissue>
    </source>
</reference>
<reference key="4">
    <citation type="journal article" date="1996" name="EMBO J.">
        <title>Sek4 and Nuk receptors cooperate in guidance of commissural axons and in palate formation.</title>
        <authorList>
            <person name="Orioli D."/>
            <person name="Henkemeyer M."/>
            <person name="Lemke G."/>
            <person name="Klein R."/>
            <person name="Pawson T."/>
        </authorList>
    </citation>
    <scope>DISRUPTION PHENOTYPE</scope>
    <scope>FUNCTION IN AXON GUIDANCE</scope>
    <scope>FUNCTION IN PALATE DEVELOPMENT</scope>
</reference>
<reference key="5">
    <citation type="journal article" date="1999" name="Genes Dev.">
        <title>Roles of ephrinB ligands and EphB receptors in cardiovascular development: demarcation of arterial/venous domains, vascular morphogenesis, and sprouting angiogenesis.</title>
        <authorList>
            <person name="Adams R.H."/>
            <person name="Wilkinson G.A."/>
            <person name="Weiss C."/>
            <person name="Diella F."/>
            <person name="Gale N.W."/>
            <person name="Deutsch U."/>
            <person name="Risau W."/>
            <person name="Klein R."/>
        </authorList>
    </citation>
    <scope>FUNCTION IN ANGIOGENESIS</scope>
    <scope>DEVELOPMENTAL STAGE</scope>
</reference>
<reference key="6">
    <citation type="journal article" date="2000" name="Development">
        <title>Complementary expression of transmembrane ephrins and their receptors in the mouse spinal cord: a possible role in constraining the orientation of longitudinally projecting axons.</title>
        <authorList>
            <person name="Imondi R."/>
            <person name="Wideman C."/>
            <person name="Kaprielian Z."/>
        </authorList>
    </citation>
    <scope>TISSUE SPECIFICITY</scope>
</reference>
<reference key="7">
    <citation type="journal article" date="2002" name="Cell">
        <title>Beta-catenin and TCF mediate cell positioning in the intestinal epithelium by controlling the expression of EphB/ephrinB.</title>
        <authorList>
            <person name="Batlle E."/>
            <person name="Henderson J.T."/>
            <person name="Beghtel H."/>
            <person name="van den Born M.M."/>
            <person name="Sancho E."/>
            <person name="Huls G."/>
            <person name="Meeldijk J."/>
            <person name="Robertson J."/>
            <person name="van de Wetering M."/>
            <person name="Pawson T."/>
            <person name="Clevers H."/>
        </authorList>
    </citation>
    <scope>FUNCTION IN INTESTINAL EPITHELIUM DIFFERENTIATION</scope>
    <scope>DEVELOPMENTAL STAGE</scope>
    <scope>TISSUE SPECIFICITY</scope>
</reference>
<reference key="8">
    <citation type="journal article" date="2003" name="J. Cell Biol.">
        <title>Multiple EphB receptor tyrosine kinases shape dendritic spines in the hippocampus.</title>
        <authorList>
            <person name="Henkemeyer M."/>
            <person name="Itkis O.S."/>
            <person name="Ngo M."/>
            <person name="Hickmott P.W."/>
            <person name="Ethell I.M."/>
        </authorList>
    </citation>
    <scope>FUNCTION IN DENDRITIC SPINE DEVELOPMENT</scope>
    <scope>FUNCTION IN EXCITATORY SYNAPSE FORMATION</scope>
    <scope>SUBCELLULAR LOCATION</scope>
</reference>
<reference key="9">
    <citation type="journal article" date="2004" name="Dev. Biol.">
        <title>Bidirectional signaling mediated by ephrin-B2 and EphB2 controls urorectal development.</title>
        <authorList>
            <person name="Dravis C."/>
            <person name="Yokoyama N."/>
            <person name="Chumley M.J."/>
            <person name="Cowan C.A."/>
            <person name="Silvany R.E."/>
            <person name="Shay J."/>
            <person name="Baker L.A."/>
            <person name="Henkemeyer M."/>
        </authorList>
    </citation>
    <scope>FUNCTION IN URORECTAL DEVELOPMENT</scope>
</reference>
<reference key="10">
    <citation type="journal article" date="2009" name="Int. J. Dev. Biol.">
        <title>On the role of Eph signalling in thymus histogenesis; EphB2/B3 and the organizing of the thymic epithelial network.</title>
        <authorList>
            <person name="Garcia-Ceca J."/>
            <person name="Jimenez E."/>
            <person name="Alfaro D."/>
            <person name="Cejalvo T."/>
            <person name="Chumley M.J."/>
            <person name="Henkemeyer M."/>
            <person name="Munoz J.J."/>
            <person name="Zapata A.G."/>
        </authorList>
    </citation>
    <scope>FUNCTION IN THYMUS DEVELOPMENT</scope>
</reference>
<reference key="11">
    <citation type="journal article" date="2010" name="Cell">
        <title>A tissue-specific atlas of mouse protein phosphorylation and expression.</title>
        <authorList>
            <person name="Huttlin E.L."/>
            <person name="Jedrychowski M.P."/>
            <person name="Elias J.E."/>
            <person name="Goswami T."/>
            <person name="Rad R."/>
            <person name="Beausoleil S.A."/>
            <person name="Villen J."/>
            <person name="Haas W."/>
            <person name="Sowa M.E."/>
            <person name="Gygi S.P."/>
        </authorList>
    </citation>
    <scope>IDENTIFICATION BY MASS SPECTROMETRY [LARGE SCALE ANALYSIS]</scope>
    <source>
        <tissue>Brain</tissue>
    </source>
</reference>
<reference key="12">
    <citation type="journal article" date="2016" name="Front. Cell Dev. Biol.">
        <title>Gene expression profiling of muscle stem cells identifies novel regulators of postnatal myogenesis.</title>
        <authorList>
            <person name="Alonso-Martin S."/>
            <person name="Rochat A."/>
            <person name="Mademtzoglou D."/>
            <person name="Morais J."/>
            <person name="de Reynies A."/>
            <person name="Aurade F."/>
            <person name="Chang T.H."/>
            <person name="Zammit P.S."/>
            <person name="Relaix F."/>
        </authorList>
    </citation>
    <scope>DEVELOPMENTAL STAGE</scope>
    <scope>TISSUE SPECIFICITY</scope>
</reference>
<evidence type="ECO:0000250" key="1"/>
<evidence type="ECO:0000250" key="2">
    <source>
        <dbReference type="UniProtKB" id="P54753"/>
    </source>
</evidence>
<evidence type="ECO:0000255" key="3"/>
<evidence type="ECO:0000255" key="4">
    <source>
        <dbReference type="PROSITE-ProRule" id="PRU00159"/>
    </source>
</evidence>
<evidence type="ECO:0000255" key="5">
    <source>
        <dbReference type="PROSITE-ProRule" id="PRU00184"/>
    </source>
</evidence>
<evidence type="ECO:0000255" key="6">
    <source>
        <dbReference type="PROSITE-ProRule" id="PRU00316"/>
    </source>
</evidence>
<evidence type="ECO:0000255" key="7">
    <source>
        <dbReference type="PROSITE-ProRule" id="PRU00883"/>
    </source>
</evidence>
<evidence type="ECO:0000255" key="8">
    <source>
        <dbReference type="PROSITE-ProRule" id="PRU10028"/>
    </source>
</evidence>
<evidence type="ECO:0000269" key="9">
    <source>
    </source>
</evidence>
<evidence type="ECO:0000269" key="10">
    <source>
    </source>
</evidence>
<evidence type="ECO:0000269" key="11">
    <source>
    </source>
</evidence>
<evidence type="ECO:0000269" key="12">
    <source>
    </source>
</evidence>
<evidence type="ECO:0000269" key="13">
    <source>
    </source>
</evidence>
<evidence type="ECO:0000269" key="14">
    <source>
    </source>
</evidence>
<evidence type="ECO:0000269" key="15">
    <source>
    </source>
</evidence>
<evidence type="ECO:0000269" key="16">
    <source>
    </source>
</evidence>
<evidence type="ECO:0000305" key="17"/>
<feature type="signal peptide" evidence="3">
    <location>
        <begin position="1"/>
        <end position="29"/>
    </location>
</feature>
<feature type="chain" id="PRO_0000016832" description="Ephrin type-B receptor 3">
    <location>
        <begin position="30"/>
        <end position="993"/>
    </location>
</feature>
<feature type="topological domain" description="Extracellular" evidence="3">
    <location>
        <begin position="30"/>
        <end position="554"/>
    </location>
</feature>
<feature type="transmembrane region" description="Helical" evidence="3">
    <location>
        <begin position="555"/>
        <end position="575"/>
    </location>
</feature>
<feature type="topological domain" description="Cytoplasmic" evidence="3">
    <location>
        <begin position="576"/>
        <end position="993"/>
    </location>
</feature>
<feature type="domain" description="Eph LBD" evidence="7">
    <location>
        <begin position="31"/>
        <end position="209"/>
    </location>
</feature>
<feature type="domain" description="Fibronectin type-III 1" evidence="6">
    <location>
        <begin position="331"/>
        <end position="446"/>
    </location>
</feature>
<feature type="domain" description="Fibronectin type-III 2" evidence="6">
    <location>
        <begin position="447"/>
        <end position="540"/>
    </location>
</feature>
<feature type="domain" description="Protein kinase" evidence="4">
    <location>
        <begin position="628"/>
        <end position="891"/>
    </location>
</feature>
<feature type="domain" description="SAM" evidence="5">
    <location>
        <begin position="920"/>
        <end position="984"/>
    </location>
</feature>
<feature type="short sequence motif" description="PDZ-binding" evidence="3">
    <location>
        <begin position="991"/>
        <end position="993"/>
    </location>
</feature>
<feature type="active site" description="Proton acceptor" evidence="4 8">
    <location>
        <position position="753"/>
    </location>
</feature>
<feature type="binding site" evidence="4">
    <location>
        <begin position="634"/>
        <end position="642"/>
    </location>
    <ligand>
        <name>ATP</name>
        <dbReference type="ChEBI" id="CHEBI:30616"/>
    </ligand>
</feature>
<feature type="binding site" evidence="4">
    <location>
        <position position="660"/>
    </location>
    <ligand>
        <name>ATP</name>
        <dbReference type="ChEBI" id="CHEBI:30616"/>
    </ligand>
</feature>
<feature type="modified residue" description="Phosphotyrosine; by autocatalysis" evidence="2">
    <location>
        <position position="609"/>
    </location>
</feature>
<feature type="glycosylation site" description="N-linked (GlcNAc...) asparagine" evidence="3">
    <location>
        <position position="343"/>
    </location>
</feature>
<feature type="glycosylation site" description="N-linked (GlcNAc...) asparagine" evidence="3">
    <location>
        <position position="440"/>
    </location>
</feature>
<feature type="disulfide bond" evidence="1">
    <location>
        <begin position="73"/>
        <end position="191"/>
    </location>
</feature>
<feature type="sequence conflict" description="In Ref. 1; CAA88910." evidence="17" ref="1">
    <original>FY</original>
    <variation>GD</variation>
    <location>
        <begin position="200"/>
        <end position="201"/>
    </location>
</feature>
<feature type="sequence conflict" description="In Ref. 1; CAA88910." evidence="17" ref="1">
    <original>V</original>
    <variation>E</variation>
    <location>
        <position position="331"/>
    </location>
</feature>
<feature type="sequence conflict" description="In Ref. 1; CAA88910." evidence="17" ref="1">
    <original>V</original>
    <variation>M</variation>
    <location>
        <position position="567"/>
    </location>
</feature>
<feature type="sequence conflict" description="In Ref. 3; CAA53599." evidence="17" ref="3">
    <original>R</original>
    <variation>Q</variation>
    <location>
        <position position="719"/>
    </location>
</feature>
<comment type="function">
    <text evidence="10 11 12 13 15 16">Receptor tyrosine kinase which binds promiscuously transmembrane ephrin-B family ligands residing on adjacent cells, leading to contact-dependent bidirectional signaling into neighboring cells. The signaling pathway downstream of the receptor is referred to as forward signaling while the signaling pathway downstream of the ephrin ligand is referred to as reverse signaling. Generally has an overlapping and redundant function with EPHB2. Like EPHB2, functions in axon guidance during development regulating for instance the neurons forming the corpus callosum and the anterior commissure, 2 major interhemispheric connections between the temporal lobes of the cerebral cortex. In addition to its role in axon guidance also plays an important redundant role with other ephrin-B receptors in development and maturation of dendritic spines and the formation of excitatory synapses. Controls other aspects of development through regulation of cell migration and positioning. This includes angiogenesis, palate development and thymic epithelium development for instance. Forward and reverse signaling through the EFNB2/EPHB3 complex also regulate migration and adhesion of cells that tubularize the urethra and septate the cloaca. Finally, plays an important role in intestinal epithelium differentiation segregating progenitor from differentiated cells in the crypt.</text>
</comment>
<comment type="catalytic activity">
    <reaction evidence="8">
        <text>L-tyrosyl-[protein] + ATP = O-phospho-L-tyrosyl-[protein] + ADP + H(+)</text>
        <dbReference type="Rhea" id="RHEA:10596"/>
        <dbReference type="Rhea" id="RHEA-COMP:10136"/>
        <dbReference type="Rhea" id="RHEA-COMP:20101"/>
        <dbReference type="ChEBI" id="CHEBI:15378"/>
        <dbReference type="ChEBI" id="CHEBI:30616"/>
        <dbReference type="ChEBI" id="CHEBI:46858"/>
        <dbReference type="ChEBI" id="CHEBI:61978"/>
        <dbReference type="ChEBI" id="CHEBI:456216"/>
        <dbReference type="EC" id="2.7.10.1"/>
    </reaction>
</comment>
<comment type="subunit">
    <text evidence="1">Heterotetramer upon binding of the ligand. The heterotetramer is composed of an ephrin dimer and a receptor dimer. Oligomerization is probably required to induce biological responses (By similarity).</text>
</comment>
<comment type="subcellular location">
    <subcellularLocation>
        <location evidence="11">Cell membrane</location>
        <topology evidence="11">Single-pass type I membrane protein</topology>
    </subcellularLocation>
    <subcellularLocation>
        <location evidence="11">Cell projection</location>
        <location evidence="11">Dendrite</location>
    </subcellularLocation>
</comment>
<comment type="tissue specificity">
    <text evidence="9 10 14">Expressed in cells of the retinal ganglion cell layer during retinal axon guidance to the optic disk. Expressed by Paneth and progenitor cells in the crypts of the intestinal epithelium (at protein level). Expressed in myogenic progenitor cells (PubMed:27446912).</text>
</comment>
<comment type="developmental stage">
    <text evidence="10 14 16">Expressed during development in yolk sacs and by embryonic endothelial cells. Expressed in the developing intestinal epithelium at the bottom of the intervillus pockets where undifferentiated cells are allocated (at protein level). In myogenic progenitor cells, highly expressed during early development (11.5 dpc) and progressively repressed as developments proceeds (PubMed:27446912).</text>
</comment>
<comment type="PTM">
    <text evidence="1">Phosphorylated. Autophosphorylates upon ligand-binding. Autophosphorylation on Tyr-609 is required for interaction with SH2 domain-containing proteins (By similarity).</text>
</comment>
<comment type="PTM">
    <text evidence="2">Ubiquitinated by RNF186, mainly through 'Lys-48' and 'Lys-63'-linked polyubiquitin chains.</text>
</comment>
<comment type="disruption phenotype">
    <text evidence="15">Mice are viable and fertile and show no obvious abnormal behavior. The corpus callosum, the main axon tract connecting the left and right cerebral hemispheres, is not formed in a significant fraction of newborns. This is associated with defects in guidance of callosal axons across the midline.</text>
</comment>
<comment type="similarity">
    <text evidence="4">Belongs to the protein kinase superfamily. Tyr protein kinase family. Ephrin receptor subfamily.</text>
</comment>
<accession>P54754</accession>
<accession>Q62214</accession>
<accession>Q91YS9</accession>
<organism>
    <name type="scientific">Mus musculus</name>
    <name type="common">Mouse</name>
    <dbReference type="NCBI Taxonomy" id="10090"/>
    <lineage>
        <taxon>Eukaryota</taxon>
        <taxon>Metazoa</taxon>
        <taxon>Chordata</taxon>
        <taxon>Craniata</taxon>
        <taxon>Vertebrata</taxon>
        <taxon>Euteleostomi</taxon>
        <taxon>Mammalia</taxon>
        <taxon>Eutheria</taxon>
        <taxon>Euarchontoglires</taxon>
        <taxon>Glires</taxon>
        <taxon>Rodentia</taxon>
        <taxon>Myomorpha</taxon>
        <taxon>Muroidea</taxon>
        <taxon>Muridae</taxon>
        <taxon>Murinae</taxon>
        <taxon>Mus</taxon>
        <taxon>Mus</taxon>
    </lineage>
</organism>
<keyword id="KW-0037">Angiogenesis</keyword>
<keyword id="KW-0067">ATP-binding</keyword>
<keyword id="KW-1003">Cell membrane</keyword>
<keyword id="KW-0966">Cell projection</keyword>
<keyword id="KW-0217">Developmental protein</keyword>
<keyword id="KW-1015">Disulfide bond</keyword>
<keyword id="KW-0325">Glycoprotein</keyword>
<keyword id="KW-0418">Kinase</keyword>
<keyword id="KW-0472">Membrane</keyword>
<keyword id="KW-0524">Neurogenesis</keyword>
<keyword id="KW-0547">Nucleotide-binding</keyword>
<keyword id="KW-0597">Phosphoprotein</keyword>
<keyword id="KW-0675">Receptor</keyword>
<keyword id="KW-1185">Reference proteome</keyword>
<keyword id="KW-0677">Repeat</keyword>
<keyword id="KW-0732">Signal</keyword>
<keyword id="KW-0808">Transferase</keyword>
<keyword id="KW-0812">Transmembrane</keyword>
<keyword id="KW-1133">Transmembrane helix</keyword>
<keyword id="KW-0829">Tyrosine-protein kinase</keyword>
<keyword id="KW-0832">Ubl conjugation</keyword>
<sequence>MAGARPPPGLLPLLAPLLLPLLLPAGCWALEETLMDTKWVTSELAWTSHPESGWEEVSGYDEAMNPIRTYQVCNVRESSQNNWLRTGFIWRREVQRVYVELKFTVRDCNSIPNIPGSCKETFNLFYYEADSDVASASSPFWMENPYVKVDTIAPDESFSRLDAGRVNTKVRSFGPLSKAGFYLAFQDQGACMSLISVRAFYKKCASTTAGFALFPETLTGAEPTSLVIAPGTCIANAVEVSVPLKLYCNGDGEWMVPVGACTCATGHEPAAKESQCRACPPGSYKAKQGEGPCLPCPPNSRTTSPAASICTCHNNFYRADSDSADSACTTVPSPPRGVISNVNETSLILEWSEPRDLGGRDDLLYNVICKKCRGSSGAGGPATCSRCDDNVEFVPRQLGLTERRVHISHLLAHTRYTFEVQAVNGVSGKSPLPPRYAAVNITTNQAAPSEVPTLHLHSSSGSSLTLSWAPPERPNGVILDYEMKYFEKSKGIASTVTSQKNSVQLDGLQPDARYVVQVRARTVAGYGQYSHPAEFETTSERGSGAQQLQEQLPLIVGSTVAGFVFMVVVVVIALVCLRKQRHGPDAEYTEKLQQYIAPGMKVYIDPFTYEDPNEAVREFAKEIDVSCVKIEEVIGAGEFGEVCRGRLKLPGRREVFVAIKTLKVGYTERQRRDFLSEASIMGQFDHPNIIRLEGVVTKSRPVMILTEFMENCALDSFLRLNDGQFTVIQLVGMLRGIAAGMKYLSEMNYVHRDLAARNILVNSNLVCKVSDFGLSRFLEDDPSDPTYTSSLGGKIPIRWTAPEAIAYRKFTSASDVWSYGIVMWEVMSYGERPYWDMSNQDVINAVEQDYRLPPPMDCPTALHQLMLDCWVRDRNLRPKFSQIVNTLDKLIRNAASLKVTASAPSGMSQPLLDRTVPDYTTFTTVGDWLDAIKMGRYKESFVGAGFASFDLVAQMTAEDLLRIGVTLAGHQKKILCSIQDMRLQMNQTLPVQV</sequence>
<protein>
    <recommendedName>
        <fullName>Ephrin type-B receptor 3</fullName>
        <ecNumber>2.7.10.1</ecNumber>
    </recommendedName>
    <alternativeName>
        <fullName>Developmental kinase 5</fullName>
        <shortName>mDK-5</shortName>
    </alternativeName>
    <alternativeName>
        <fullName>Tyrosine-protein kinase receptor SEK-4</fullName>
    </alternativeName>
</protein>
<proteinExistence type="evidence at protein level"/>
<dbReference type="EC" id="2.7.10.1"/>
<dbReference type="EMBL" id="Z49086">
    <property type="protein sequence ID" value="CAA88910.1"/>
    <property type="molecule type" value="mRNA"/>
</dbReference>
<dbReference type="EMBL" id="BC014822">
    <property type="protein sequence ID" value="AAH14822.1"/>
    <property type="molecule type" value="mRNA"/>
</dbReference>
<dbReference type="EMBL" id="BC053085">
    <property type="protein sequence ID" value="AAH53085.1"/>
    <property type="molecule type" value="mRNA"/>
</dbReference>
<dbReference type="EMBL" id="X76012">
    <property type="protein sequence ID" value="CAA53599.1"/>
    <property type="molecule type" value="mRNA"/>
</dbReference>
<dbReference type="CCDS" id="CCDS28060.1"/>
<dbReference type="PIR" id="I48653">
    <property type="entry name" value="I48653"/>
</dbReference>
<dbReference type="PIR" id="I48761">
    <property type="entry name" value="I48761"/>
</dbReference>
<dbReference type="RefSeq" id="NP_034273.1">
    <property type="nucleotide sequence ID" value="NM_010143.2"/>
</dbReference>
<dbReference type="SMR" id="P54754"/>
<dbReference type="BioGRID" id="199477">
    <property type="interactions" value="14"/>
</dbReference>
<dbReference type="FunCoup" id="P54754">
    <property type="interactions" value="457"/>
</dbReference>
<dbReference type="STRING" id="10090.ENSMUSP00000006112"/>
<dbReference type="BindingDB" id="P54754"/>
<dbReference type="ChEMBL" id="CHEMBL4739678"/>
<dbReference type="GuidetoPHARMACOLOGY" id="1832"/>
<dbReference type="GlyCosmos" id="P54754">
    <property type="glycosylation" value="2 sites, No reported glycans"/>
</dbReference>
<dbReference type="GlyGen" id="P54754">
    <property type="glycosylation" value="2 sites"/>
</dbReference>
<dbReference type="iPTMnet" id="P54754"/>
<dbReference type="PhosphoSitePlus" id="P54754"/>
<dbReference type="PaxDb" id="10090-ENSMUSP00000006112"/>
<dbReference type="PeptideAtlas" id="P54754"/>
<dbReference type="ProteomicsDB" id="275627"/>
<dbReference type="Pumba" id="P54754"/>
<dbReference type="Antibodypedia" id="2107">
    <property type="antibodies" value="616 antibodies from 37 providers"/>
</dbReference>
<dbReference type="DNASU" id="13845"/>
<dbReference type="Ensembl" id="ENSMUST00000006112.7">
    <property type="protein sequence ID" value="ENSMUSP00000006112.7"/>
    <property type="gene ID" value="ENSMUSG00000005958.16"/>
</dbReference>
<dbReference type="GeneID" id="13845"/>
<dbReference type="KEGG" id="mmu:13845"/>
<dbReference type="UCSC" id="uc007yrg.1">
    <property type="organism name" value="mouse"/>
</dbReference>
<dbReference type="AGR" id="MGI:104770"/>
<dbReference type="CTD" id="2049"/>
<dbReference type="MGI" id="MGI:104770">
    <property type="gene designation" value="Ephb3"/>
</dbReference>
<dbReference type="VEuPathDB" id="HostDB:ENSMUSG00000005958"/>
<dbReference type="eggNOG" id="KOG0196">
    <property type="taxonomic scope" value="Eukaryota"/>
</dbReference>
<dbReference type="GeneTree" id="ENSGT00940000158024"/>
<dbReference type="HOGENOM" id="CLU_000288_141_0_1"/>
<dbReference type="InParanoid" id="P54754"/>
<dbReference type="OMA" id="DACYVVQ"/>
<dbReference type="OrthoDB" id="4062651at2759"/>
<dbReference type="PhylomeDB" id="P54754"/>
<dbReference type="TreeFam" id="TF315608"/>
<dbReference type="BRENDA" id="2.7.10.1">
    <property type="organism ID" value="3474"/>
</dbReference>
<dbReference type="Reactome" id="R-MMU-2682334">
    <property type="pathway name" value="EPH-Ephrin signaling"/>
</dbReference>
<dbReference type="Reactome" id="R-MMU-3928662">
    <property type="pathway name" value="EPHB-mediated forward signaling"/>
</dbReference>
<dbReference type="Reactome" id="R-MMU-3928664">
    <property type="pathway name" value="Ephrin signaling"/>
</dbReference>
<dbReference type="Reactome" id="R-MMU-3928665">
    <property type="pathway name" value="EPH-ephrin mediated repulsion of cells"/>
</dbReference>
<dbReference type="BioGRID-ORCS" id="13845">
    <property type="hits" value="2 hits in 81 CRISPR screens"/>
</dbReference>
<dbReference type="ChiTaRS" id="Ephb3">
    <property type="organism name" value="mouse"/>
</dbReference>
<dbReference type="PRO" id="PR:P54754"/>
<dbReference type="Proteomes" id="UP000000589">
    <property type="component" value="Chromosome 16"/>
</dbReference>
<dbReference type="RNAct" id="P54754">
    <property type="molecule type" value="protein"/>
</dbReference>
<dbReference type="Bgee" id="ENSMUSG00000005958">
    <property type="expression patterns" value="Expressed in saccule of membranous labyrinth and 238 other cell types or tissues"/>
</dbReference>
<dbReference type="ExpressionAtlas" id="P54754">
    <property type="expression patterns" value="baseline and differential"/>
</dbReference>
<dbReference type="GO" id="GO:0030425">
    <property type="term" value="C:dendrite"/>
    <property type="evidence" value="ECO:0007669"/>
    <property type="project" value="UniProtKB-SubCell"/>
</dbReference>
<dbReference type="GO" id="GO:0005886">
    <property type="term" value="C:plasma membrane"/>
    <property type="evidence" value="ECO:0000250"/>
    <property type="project" value="UniProtKB"/>
</dbReference>
<dbReference type="GO" id="GO:0005524">
    <property type="term" value="F:ATP binding"/>
    <property type="evidence" value="ECO:0007669"/>
    <property type="project" value="UniProtKB-KW"/>
</dbReference>
<dbReference type="GO" id="GO:0008046">
    <property type="term" value="F:axon guidance receptor activity"/>
    <property type="evidence" value="ECO:0000314"/>
    <property type="project" value="MGI"/>
</dbReference>
<dbReference type="GO" id="GO:0005003">
    <property type="term" value="F:ephrin receptor activity"/>
    <property type="evidence" value="ECO:0000250"/>
    <property type="project" value="UniProtKB"/>
</dbReference>
<dbReference type="GO" id="GO:0005005">
    <property type="term" value="F:transmembrane-ephrin receptor activity"/>
    <property type="evidence" value="ECO:0000304"/>
    <property type="project" value="MGI"/>
</dbReference>
<dbReference type="GO" id="GO:0001525">
    <property type="term" value="P:angiogenesis"/>
    <property type="evidence" value="ECO:0000315"/>
    <property type="project" value="UniProtKB"/>
</dbReference>
<dbReference type="GO" id="GO:0007411">
    <property type="term" value="P:axon guidance"/>
    <property type="evidence" value="ECO:0000314"/>
    <property type="project" value="MGI"/>
</dbReference>
<dbReference type="GO" id="GO:0007413">
    <property type="term" value="P:axonal fasciculation"/>
    <property type="evidence" value="ECO:0000315"/>
    <property type="project" value="UniProtKB"/>
</dbReference>
<dbReference type="GO" id="GO:0016477">
    <property type="term" value="P:cell migration"/>
    <property type="evidence" value="ECO:0000315"/>
    <property type="project" value="UniProtKB"/>
</dbReference>
<dbReference type="GO" id="GO:0021952">
    <property type="term" value="P:central nervous system projection neuron axonogenesis"/>
    <property type="evidence" value="ECO:0000314"/>
    <property type="project" value="MGI"/>
</dbReference>
<dbReference type="GO" id="GO:0022038">
    <property type="term" value="P:corpus callosum development"/>
    <property type="evidence" value="ECO:0000315"/>
    <property type="project" value="UniProtKB"/>
</dbReference>
<dbReference type="GO" id="GO:0060996">
    <property type="term" value="P:dendritic spine development"/>
    <property type="evidence" value="ECO:0000315"/>
    <property type="project" value="UniProtKB"/>
</dbReference>
<dbReference type="GO" id="GO:0060997">
    <property type="term" value="P:dendritic spine morphogenesis"/>
    <property type="evidence" value="ECO:0000315"/>
    <property type="project" value="UniProtKB"/>
</dbReference>
<dbReference type="GO" id="GO:0048546">
    <property type="term" value="P:digestive tract morphogenesis"/>
    <property type="evidence" value="ECO:0000315"/>
    <property type="project" value="UniProtKB"/>
</dbReference>
<dbReference type="GO" id="GO:0048013">
    <property type="term" value="P:ephrin receptor signaling pathway"/>
    <property type="evidence" value="ECO:0000250"/>
    <property type="project" value="UniProtKB"/>
</dbReference>
<dbReference type="GO" id="GO:0051965">
    <property type="term" value="P:positive regulation of synapse assembly"/>
    <property type="evidence" value="ECO:0000315"/>
    <property type="project" value="UniProtKB"/>
</dbReference>
<dbReference type="GO" id="GO:0046777">
    <property type="term" value="P:protein autophosphorylation"/>
    <property type="evidence" value="ECO:0000250"/>
    <property type="project" value="UniProtKB"/>
</dbReference>
<dbReference type="GO" id="GO:0050770">
    <property type="term" value="P:regulation of axonogenesis"/>
    <property type="evidence" value="ECO:0000314"/>
    <property type="project" value="UniProtKB"/>
</dbReference>
<dbReference type="GO" id="GO:0022407">
    <property type="term" value="P:regulation of cell-cell adhesion"/>
    <property type="evidence" value="ECO:0000250"/>
    <property type="project" value="UniProtKB"/>
</dbReference>
<dbReference type="GO" id="GO:0043087">
    <property type="term" value="P:regulation of GTPase activity"/>
    <property type="evidence" value="ECO:0000250"/>
    <property type="project" value="UniProtKB"/>
</dbReference>
<dbReference type="GO" id="GO:0031290">
    <property type="term" value="P:retinal ganglion cell axon guidance"/>
    <property type="evidence" value="ECO:0000314"/>
    <property type="project" value="MGI"/>
</dbReference>
<dbReference type="GO" id="GO:0060021">
    <property type="term" value="P:roof of mouth development"/>
    <property type="evidence" value="ECO:0000315"/>
    <property type="project" value="UniProtKB"/>
</dbReference>
<dbReference type="GO" id="GO:0034446">
    <property type="term" value="P:substrate adhesion-dependent cell spreading"/>
    <property type="evidence" value="ECO:0000250"/>
    <property type="project" value="UniProtKB"/>
</dbReference>
<dbReference type="GO" id="GO:0048538">
    <property type="term" value="P:thymus development"/>
    <property type="evidence" value="ECO:0000315"/>
    <property type="project" value="UniProtKB"/>
</dbReference>
<dbReference type="GO" id="GO:0001655">
    <property type="term" value="P:urogenital system development"/>
    <property type="evidence" value="ECO:0000315"/>
    <property type="project" value="UniProtKB"/>
</dbReference>
<dbReference type="CDD" id="cd10478">
    <property type="entry name" value="EphR_LBD_B3"/>
    <property type="match status" value="1"/>
</dbReference>
<dbReference type="CDD" id="cd00063">
    <property type="entry name" value="FN3"/>
    <property type="match status" value="2"/>
</dbReference>
<dbReference type="CDD" id="cd05065">
    <property type="entry name" value="PTKc_EphR_B"/>
    <property type="match status" value="1"/>
</dbReference>
<dbReference type="FunFam" id="2.60.40.10:FF:000041">
    <property type="entry name" value="ephrin type-A receptor 3"/>
    <property type="match status" value="1"/>
</dbReference>
<dbReference type="FunFam" id="1.10.150.50:FF:000001">
    <property type="entry name" value="Ephrin type-A receptor 5"/>
    <property type="match status" value="1"/>
</dbReference>
<dbReference type="FunFam" id="2.10.50.10:FF:000001">
    <property type="entry name" value="Ephrin type-A receptor 5"/>
    <property type="match status" value="1"/>
</dbReference>
<dbReference type="FunFam" id="2.60.40.1770:FF:000001">
    <property type="entry name" value="Ephrin type-A receptor 5"/>
    <property type="match status" value="1"/>
</dbReference>
<dbReference type="FunFam" id="3.30.200.20:FF:000001">
    <property type="entry name" value="Ephrin type-A receptor 5"/>
    <property type="match status" value="1"/>
</dbReference>
<dbReference type="FunFam" id="1.10.510.10:FF:000015">
    <property type="entry name" value="Ephrin type-B receptor 2"/>
    <property type="match status" value="1"/>
</dbReference>
<dbReference type="FunFam" id="2.60.120.260:FF:000004">
    <property type="entry name" value="Ephrin type-B receptor 2"/>
    <property type="match status" value="1"/>
</dbReference>
<dbReference type="FunFam" id="2.60.40.10:FF:000520">
    <property type="entry name" value="ephrin type-B receptor 3"/>
    <property type="match status" value="1"/>
</dbReference>
<dbReference type="Gene3D" id="2.60.40.1770">
    <property type="entry name" value="ephrin a2 ectodomain"/>
    <property type="match status" value="1"/>
</dbReference>
<dbReference type="Gene3D" id="2.60.120.260">
    <property type="entry name" value="Galactose-binding domain-like"/>
    <property type="match status" value="1"/>
</dbReference>
<dbReference type="Gene3D" id="2.60.40.10">
    <property type="entry name" value="Immunoglobulins"/>
    <property type="match status" value="2"/>
</dbReference>
<dbReference type="Gene3D" id="3.30.200.20">
    <property type="entry name" value="Phosphorylase Kinase, domain 1"/>
    <property type="match status" value="1"/>
</dbReference>
<dbReference type="Gene3D" id="1.10.150.50">
    <property type="entry name" value="Transcription Factor, Ets-1"/>
    <property type="match status" value="1"/>
</dbReference>
<dbReference type="Gene3D" id="1.10.510.10">
    <property type="entry name" value="Transferase(Phosphotransferase) domain 1"/>
    <property type="match status" value="1"/>
</dbReference>
<dbReference type="Gene3D" id="2.10.50.10">
    <property type="entry name" value="Tumor Necrosis Factor Receptor, subunit A, domain 2"/>
    <property type="match status" value="1"/>
</dbReference>
<dbReference type="InterPro" id="IPR027936">
    <property type="entry name" value="Eph_TM"/>
</dbReference>
<dbReference type="InterPro" id="IPR034245">
    <property type="entry name" value="EphB3_rcpt_lig-bd"/>
</dbReference>
<dbReference type="InterPro" id="IPR001090">
    <property type="entry name" value="Ephrin_rcpt_lig-bd_dom"/>
</dbReference>
<dbReference type="InterPro" id="IPR050449">
    <property type="entry name" value="Ephrin_rcpt_TKs"/>
</dbReference>
<dbReference type="InterPro" id="IPR003961">
    <property type="entry name" value="FN3_dom"/>
</dbReference>
<dbReference type="InterPro" id="IPR036116">
    <property type="entry name" value="FN3_sf"/>
</dbReference>
<dbReference type="InterPro" id="IPR008979">
    <property type="entry name" value="Galactose-bd-like_sf"/>
</dbReference>
<dbReference type="InterPro" id="IPR013783">
    <property type="entry name" value="Ig-like_fold"/>
</dbReference>
<dbReference type="InterPro" id="IPR011009">
    <property type="entry name" value="Kinase-like_dom_sf"/>
</dbReference>
<dbReference type="InterPro" id="IPR000719">
    <property type="entry name" value="Prot_kinase_dom"/>
</dbReference>
<dbReference type="InterPro" id="IPR017441">
    <property type="entry name" value="Protein_kinase_ATP_BS"/>
</dbReference>
<dbReference type="InterPro" id="IPR001660">
    <property type="entry name" value="SAM"/>
</dbReference>
<dbReference type="InterPro" id="IPR013761">
    <property type="entry name" value="SAM/pointed_sf"/>
</dbReference>
<dbReference type="InterPro" id="IPR001245">
    <property type="entry name" value="Ser-Thr/Tyr_kinase_cat_dom"/>
</dbReference>
<dbReference type="InterPro" id="IPR011641">
    <property type="entry name" value="Tyr-kin_ephrin_A/B_rcpt-like"/>
</dbReference>
<dbReference type="InterPro" id="IPR008266">
    <property type="entry name" value="Tyr_kinase_AS"/>
</dbReference>
<dbReference type="InterPro" id="IPR020635">
    <property type="entry name" value="Tyr_kinase_cat_dom"/>
</dbReference>
<dbReference type="InterPro" id="IPR016257">
    <property type="entry name" value="Tyr_kinase_ephrin_rcpt"/>
</dbReference>
<dbReference type="InterPro" id="IPR001426">
    <property type="entry name" value="Tyr_kinase_rcpt_V_CS"/>
</dbReference>
<dbReference type="PANTHER" id="PTHR46877">
    <property type="entry name" value="EPH RECEPTOR A5"/>
    <property type="match status" value="1"/>
</dbReference>
<dbReference type="PANTHER" id="PTHR46877:SF6">
    <property type="entry name" value="EPHRIN TYPE-B RECEPTOR 3"/>
    <property type="match status" value="1"/>
</dbReference>
<dbReference type="Pfam" id="PF14575">
    <property type="entry name" value="EphA2_TM"/>
    <property type="match status" value="1"/>
</dbReference>
<dbReference type="Pfam" id="PF01404">
    <property type="entry name" value="Ephrin_lbd"/>
    <property type="match status" value="1"/>
</dbReference>
<dbReference type="Pfam" id="PF07699">
    <property type="entry name" value="Ephrin_rec_like"/>
    <property type="match status" value="1"/>
</dbReference>
<dbReference type="Pfam" id="PF00041">
    <property type="entry name" value="fn3"/>
    <property type="match status" value="2"/>
</dbReference>
<dbReference type="Pfam" id="PF07714">
    <property type="entry name" value="PK_Tyr_Ser-Thr"/>
    <property type="match status" value="1"/>
</dbReference>
<dbReference type="Pfam" id="PF00536">
    <property type="entry name" value="SAM_1"/>
    <property type="match status" value="1"/>
</dbReference>
<dbReference type="PIRSF" id="PIRSF000666">
    <property type="entry name" value="TyrPK_ephrin_receptor"/>
    <property type="match status" value="1"/>
</dbReference>
<dbReference type="PRINTS" id="PR00014">
    <property type="entry name" value="FNTYPEIII"/>
</dbReference>
<dbReference type="PRINTS" id="PR00109">
    <property type="entry name" value="TYRKINASE"/>
</dbReference>
<dbReference type="SMART" id="SM00615">
    <property type="entry name" value="EPH_lbd"/>
    <property type="match status" value="1"/>
</dbReference>
<dbReference type="SMART" id="SM01411">
    <property type="entry name" value="Ephrin_rec_like"/>
    <property type="match status" value="1"/>
</dbReference>
<dbReference type="SMART" id="SM00060">
    <property type="entry name" value="FN3"/>
    <property type="match status" value="2"/>
</dbReference>
<dbReference type="SMART" id="SM00454">
    <property type="entry name" value="SAM"/>
    <property type="match status" value="1"/>
</dbReference>
<dbReference type="SMART" id="SM00219">
    <property type="entry name" value="TyrKc"/>
    <property type="match status" value="1"/>
</dbReference>
<dbReference type="SUPFAM" id="SSF49265">
    <property type="entry name" value="Fibronectin type III"/>
    <property type="match status" value="1"/>
</dbReference>
<dbReference type="SUPFAM" id="SSF49785">
    <property type="entry name" value="Galactose-binding domain-like"/>
    <property type="match status" value="1"/>
</dbReference>
<dbReference type="SUPFAM" id="SSF56112">
    <property type="entry name" value="Protein kinase-like (PK-like)"/>
    <property type="match status" value="1"/>
</dbReference>
<dbReference type="SUPFAM" id="SSF47769">
    <property type="entry name" value="SAM/Pointed domain"/>
    <property type="match status" value="1"/>
</dbReference>
<dbReference type="PROSITE" id="PS51550">
    <property type="entry name" value="EPH_LBD"/>
    <property type="match status" value="1"/>
</dbReference>
<dbReference type="PROSITE" id="PS50853">
    <property type="entry name" value="FN3"/>
    <property type="match status" value="2"/>
</dbReference>
<dbReference type="PROSITE" id="PS00107">
    <property type="entry name" value="PROTEIN_KINASE_ATP"/>
    <property type="match status" value="1"/>
</dbReference>
<dbReference type="PROSITE" id="PS50011">
    <property type="entry name" value="PROTEIN_KINASE_DOM"/>
    <property type="match status" value="1"/>
</dbReference>
<dbReference type="PROSITE" id="PS00109">
    <property type="entry name" value="PROTEIN_KINASE_TYR"/>
    <property type="match status" value="1"/>
</dbReference>
<dbReference type="PROSITE" id="PS00790">
    <property type="entry name" value="RECEPTOR_TYR_KIN_V_1"/>
    <property type="match status" value="1"/>
</dbReference>
<dbReference type="PROSITE" id="PS00791">
    <property type="entry name" value="RECEPTOR_TYR_KIN_V_2"/>
    <property type="match status" value="1"/>
</dbReference>
<dbReference type="PROSITE" id="PS50105">
    <property type="entry name" value="SAM_DOMAIN"/>
    <property type="match status" value="1"/>
</dbReference>